<proteinExistence type="inferred from homology"/>
<name>RL6_STAA1</name>
<reference key="1">
    <citation type="journal article" date="2008" name="Antimicrob. Agents Chemother.">
        <title>Mutated response regulator graR is responsible for phenotypic conversion of Staphylococcus aureus from heterogeneous vancomycin-intermediate resistance to vancomycin-intermediate resistance.</title>
        <authorList>
            <person name="Neoh H.-M."/>
            <person name="Cui L."/>
            <person name="Yuzawa H."/>
            <person name="Takeuchi F."/>
            <person name="Matsuo M."/>
            <person name="Hiramatsu K."/>
        </authorList>
    </citation>
    <scope>NUCLEOTIDE SEQUENCE [LARGE SCALE GENOMIC DNA]</scope>
    <source>
        <strain>Mu3 / ATCC 700698</strain>
    </source>
</reference>
<feature type="chain" id="PRO_1000055313" description="Large ribosomal subunit protein uL6">
    <location>
        <begin position="1"/>
        <end position="178"/>
    </location>
</feature>
<dbReference type="EMBL" id="AP009324">
    <property type="protein sequence ID" value="BAF79102.1"/>
    <property type="molecule type" value="Genomic_DNA"/>
</dbReference>
<dbReference type="RefSeq" id="WP_000091975.1">
    <property type="nucleotide sequence ID" value="NZ_CTYB01000025.1"/>
</dbReference>
<dbReference type="SMR" id="A7X5E1"/>
<dbReference type="KEGG" id="saw:SAHV_2219"/>
<dbReference type="HOGENOM" id="CLU_065464_1_2_9"/>
<dbReference type="GO" id="GO:0022625">
    <property type="term" value="C:cytosolic large ribosomal subunit"/>
    <property type="evidence" value="ECO:0007669"/>
    <property type="project" value="TreeGrafter"/>
</dbReference>
<dbReference type="GO" id="GO:0019843">
    <property type="term" value="F:rRNA binding"/>
    <property type="evidence" value="ECO:0007669"/>
    <property type="project" value="UniProtKB-UniRule"/>
</dbReference>
<dbReference type="GO" id="GO:0003735">
    <property type="term" value="F:structural constituent of ribosome"/>
    <property type="evidence" value="ECO:0007669"/>
    <property type="project" value="InterPro"/>
</dbReference>
<dbReference type="GO" id="GO:0002181">
    <property type="term" value="P:cytoplasmic translation"/>
    <property type="evidence" value="ECO:0007669"/>
    <property type="project" value="TreeGrafter"/>
</dbReference>
<dbReference type="FunFam" id="3.90.930.12:FF:000001">
    <property type="entry name" value="50S ribosomal protein L6"/>
    <property type="match status" value="1"/>
</dbReference>
<dbReference type="FunFam" id="3.90.930.12:FF:000002">
    <property type="entry name" value="50S ribosomal protein L6"/>
    <property type="match status" value="1"/>
</dbReference>
<dbReference type="Gene3D" id="3.90.930.12">
    <property type="entry name" value="Ribosomal protein L6, alpha-beta domain"/>
    <property type="match status" value="2"/>
</dbReference>
<dbReference type="HAMAP" id="MF_01365_B">
    <property type="entry name" value="Ribosomal_uL6_B"/>
    <property type="match status" value="1"/>
</dbReference>
<dbReference type="InterPro" id="IPR000702">
    <property type="entry name" value="Ribosomal_uL6-like"/>
</dbReference>
<dbReference type="InterPro" id="IPR036789">
    <property type="entry name" value="Ribosomal_uL6-like_a/b-dom_sf"/>
</dbReference>
<dbReference type="InterPro" id="IPR020040">
    <property type="entry name" value="Ribosomal_uL6_a/b-dom"/>
</dbReference>
<dbReference type="InterPro" id="IPR019906">
    <property type="entry name" value="Ribosomal_uL6_bac-type"/>
</dbReference>
<dbReference type="InterPro" id="IPR002358">
    <property type="entry name" value="Ribosomal_uL6_CS"/>
</dbReference>
<dbReference type="NCBIfam" id="TIGR03654">
    <property type="entry name" value="L6_bact"/>
    <property type="match status" value="1"/>
</dbReference>
<dbReference type="PANTHER" id="PTHR11655">
    <property type="entry name" value="60S/50S RIBOSOMAL PROTEIN L6/L9"/>
    <property type="match status" value="1"/>
</dbReference>
<dbReference type="PANTHER" id="PTHR11655:SF14">
    <property type="entry name" value="LARGE RIBOSOMAL SUBUNIT PROTEIN UL6M"/>
    <property type="match status" value="1"/>
</dbReference>
<dbReference type="Pfam" id="PF00347">
    <property type="entry name" value="Ribosomal_L6"/>
    <property type="match status" value="2"/>
</dbReference>
<dbReference type="PIRSF" id="PIRSF002162">
    <property type="entry name" value="Ribosomal_L6"/>
    <property type="match status" value="1"/>
</dbReference>
<dbReference type="PRINTS" id="PR00059">
    <property type="entry name" value="RIBOSOMALL6"/>
</dbReference>
<dbReference type="SUPFAM" id="SSF56053">
    <property type="entry name" value="Ribosomal protein L6"/>
    <property type="match status" value="2"/>
</dbReference>
<dbReference type="PROSITE" id="PS00525">
    <property type="entry name" value="RIBOSOMAL_L6_1"/>
    <property type="match status" value="1"/>
</dbReference>
<accession>A7X5E1</accession>
<organism>
    <name type="scientific">Staphylococcus aureus (strain Mu3 / ATCC 700698)</name>
    <dbReference type="NCBI Taxonomy" id="418127"/>
    <lineage>
        <taxon>Bacteria</taxon>
        <taxon>Bacillati</taxon>
        <taxon>Bacillota</taxon>
        <taxon>Bacilli</taxon>
        <taxon>Bacillales</taxon>
        <taxon>Staphylococcaceae</taxon>
        <taxon>Staphylococcus</taxon>
    </lineage>
</organism>
<sequence>MSRVGKKIIDIPSDVTVTFDGNHVTVKGPKGELSRTLNERMTFKQEENTIEVVRPSDSKEDRTNHGTTRALLNNMVQGVSQGYVKVLELVGVGYRAQMQGKDLILNVGYSHPVEIKAEENITFSVEKNTVVKVEGISKEQVGALASNIRSVRPPEPYKGKGIRYQGEYVRRKEGKTGK</sequence>
<evidence type="ECO:0000255" key="1">
    <source>
        <dbReference type="HAMAP-Rule" id="MF_01365"/>
    </source>
</evidence>
<evidence type="ECO:0000305" key="2"/>
<gene>
    <name evidence="1" type="primary">rplF</name>
    <name type="ordered locus">SAHV_2219</name>
</gene>
<protein>
    <recommendedName>
        <fullName evidence="1">Large ribosomal subunit protein uL6</fullName>
    </recommendedName>
    <alternativeName>
        <fullName evidence="2">50S ribosomal protein L6</fullName>
    </alternativeName>
</protein>
<comment type="function">
    <text evidence="1">This protein binds to the 23S rRNA, and is important in its secondary structure. It is located near the subunit interface in the base of the L7/L12 stalk, and near the tRNA binding site of the peptidyltransferase center.</text>
</comment>
<comment type="subunit">
    <text evidence="1">Part of the 50S ribosomal subunit.</text>
</comment>
<comment type="similarity">
    <text evidence="1">Belongs to the universal ribosomal protein uL6 family.</text>
</comment>
<keyword id="KW-0687">Ribonucleoprotein</keyword>
<keyword id="KW-0689">Ribosomal protein</keyword>
<keyword id="KW-0694">RNA-binding</keyword>
<keyword id="KW-0699">rRNA-binding</keyword>